<proteinExistence type="inferred from homology"/>
<sequence>MIIKPKIRGFICTTTHPVGCEANVQEQITFTKNKGKIANGPKKVLVVGSSSGYGLSSRIAAAFGCDAATIGVFFEKPGTETKPGTAGWYNSAAFDKFAKAEGLYSKSINCDAFSHEAKQKVIELIKQDLGEIDMVVYSLASPVRRLPDSGEVIRSALKPIGETYTATAVDTNKDCIIEATVEPATEQEIADTVTVMGGQDWELWIKALSEAGVLANNCKTVAYSYIGTELTWPIYWHGALGKAKMDLDRAAKALNDQLSATGGSANVAVLKSVVTQASSAIPVMPLYIAMVFKKMRQEGLHEGCMEQIYRMFSERLYRTDGAKPETDSDNRLRLDDWELRDDIQQHCRDLWPQVTTENLSELTDYREYKAEFIKLFGFGIEGIDYDADVNPYVEFDVIELQ</sequence>
<feature type="chain" id="PRO_1000070502" description="Enoyl-[acyl-carrier-protein] reductase [NADH]">
    <location>
        <begin position="1"/>
        <end position="401"/>
    </location>
</feature>
<feature type="active site" description="Proton donor" evidence="1">
    <location>
        <position position="235"/>
    </location>
</feature>
<feature type="binding site" evidence="1">
    <location>
        <begin position="48"/>
        <end position="53"/>
    </location>
    <ligand>
        <name>NAD(+)</name>
        <dbReference type="ChEBI" id="CHEBI:57540"/>
    </ligand>
</feature>
<feature type="binding site" evidence="1">
    <location>
        <begin position="74"/>
        <end position="75"/>
    </location>
    <ligand>
        <name>NAD(+)</name>
        <dbReference type="ChEBI" id="CHEBI:57540"/>
    </ligand>
</feature>
<feature type="binding site" evidence="1">
    <location>
        <begin position="111"/>
        <end position="112"/>
    </location>
    <ligand>
        <name>NAD(+)</name>
        <dbReference type="ChEBI" id="CHEBI:57540"/>
    </ligand>
</feature>
<feature type="binding site" evidence="1">
    <location>
        <begin position="139"/>
        <end position="140"/>
    </location>
    <ligand>
        <name>NAD(+)</name>
        <dbReference type="ChEBI" id="CHEBI:57540"/>
    </ligand>
</feature>
<feature type="binding site" evidence="1">
    <location>
        <position position="225"/>
    </location>
    <ligand>
        <name>substrate</name>
    </ligand>
</feature>
<feature type="binding site" evidence="1">
    <location>
        <position position="244"/>
    </location>
    <ligand>
        <name>NAD(+)</name>
        <dbReference type="ChEBI" id="CHEBI:57540"/>
    </ligand>
</feature>
<feature type="binding site" evidence="1">
    <location>
        <begin position="273"/>
        <end position="275"/>
    </location>
    <ligand>
        <name>NAD(+)</name>
        <dbReference type="ChEBI" id="CHEBI:57540"/>
    </ligand>
</feature>
<feature type="site" description="Plays an important role in discriminating NADH against NADPH" evidence="1">
    <location>
        <position position="75"/>
    </location>
</feature>
<keyword id="KW-0275">Fatty acid biosynthesis</keyword>
<keyword id="KW-0276">Fatty acid metabolism</keyword>
<keyword id="KW-0444">Lipid biosynthesis</keyword>
<keyword id="KW-0443">Lipid metabolism</keyword>
<keyword id="KW-0520">NAD</keyword>
<keyword id="KW-0560">Oxidoreductase</keyword>
<organism>
    <name type="scientific">Shewanella sp. (strain W3-18-1)</name>
    <dbReference type="NCBI Taxonomy" id="351745"/>
    <lineage>
        <taxon>Bacteria</taxon>
        <taxon>Pseudomonadati</taxon>
        <taxon>Pseudomonadota</taxon>
        <taxon>Gammaproteobacteria</taxon>
        <taxon>Alteromonadales</taxon>
        <taxon>Shewanellaceae</taxon>
        <taxon>Shewanella</taxon>
    </lineage>
</organism>
<comment type="function">
    <text evidence="1">Involved in the final reduction of the elongation cycle of fatty acid synthesis (FAS II). Catalyzes the reduction of a carbon-carbon double bond in an enoyl moiety that is covalently linked to an acyl carrier protein (ACP).</text>
</comment>
<comment type="catalytic activity">
    <reaction evidence="1">
        <text>a 2,3-saturated acyl-[ACP] + NAD(+) = a (2E)-enoyl-[ACP] + NADH + H(+)</text>
        <dbReference type="Rhea" id="RHEA:10240"/>
        <dbReference type="Rhea" id="RHEA-COMP:9925"/>
        <dbReference type="Rhea" id="RHEA-COMP:9926"/>
        <dbReference type="ChEBI" id="CHEBI:15378"/>
        <dbReference type="ChEBI" id="CHEBI:57540"/>
        <dbReference type="ChEBI" id="CHEBI:57945"/>
        <dbReference type="ChEBI" id="CHEBI:78784"/>
        <dbReference type="ChEBI" id="CHEBI:78785"/>
        <dbReference type="EC" id="1.3.1.9"/>
    </reaction>
</comment>
<comment type="pathway">
    <text evidence="1">Lipid metabolism; fatty acid biosynthesis.</text>
</comment>
<comment type="subunit">
    <text evidence="1">Monomer.</text>
</comment>
<comment type="similarity">
    <text evidence="1">Belongs to the TER reductase family.</text>
</comment>
<accession>A1RL84</accession>
<reference key="1">
    <citation type="submission" date="2006-12" db="EMBL/GenBank/DDBJ databases">
        <title>Complete sequence of Shewanella sp. W3-18-1.</title>
        <authorList>
            <consortium name="US DOE Joint Genome Institute"/>
            <person name="Copeland A."/>
            <person name="Lucas S."/>
            <person name="Lapidus A."/>
            <person name="Barry K."/>
            <person name="Detter J.C."/>
            <person name="Glavina del Rio T."/>
            <person name="Hammon N."/>
            <person name="Israni S."/>
            <person name="Dalin E."/>
            <person name="Tice H."/>
            <person name="Pitluck S."/>
            <person name="Chain P."/>
            <person name="Malfatti S."/>
            <person name="Shin M."/>
            <person name="Vergez L."/>
            <person name="Schmutz J."/>
            <person name="Larimer F."/>
            <person name="Land M."/>
            <person name="Hauser L."/>
            <person name="Kyrpides N."/>
            <person name="Lykidis A."/>
            <person name="Tiedje J."/>
            <person name="Richardson P."/>
        </authorList>
    </citation>
    <scope>NUCLEOTIDE SEQUENCE [LARGE SCALE GENOMIC DNA]</scope>
    <source>
        <strain>W3-18-1</strain>
    </source>
</reference>
<gene>
    <name evidence="1" type="primary">fabV</name>
    <name type="ordered locus">Sputw3181_2606</name>
</gene>
<evidence type="ECO:0000255" key="1">
    <source>
        <dbReference type="HAMAP-Rule" id="MF_01838"/>
    </source>
</evidence>
<name>FABV_SHESW</name>
<dbReference type="EC" id="1.3.1.9" evidence="1"/>
<dbReference type="EMBL" id="CP000503">
    <property type="protein sequence ID" value="ABM25429.1"/>
    <property type="molecule type" value="Genomic_DNA"/>
</dbReference>
<dbReference type="RefSeq" id="WP_011789887.1">
    <property type="nucleotide sequence ID" value="NC_008750.1"/>
</dbReference>
<dbReference type="SMR" id="A1RL84"/>
<dbReference type="KEGG" id="shw:Sputw3181_2606"/>
<dbReference type="HOGENOM" id="CLU_057698_1_0_6"/>
<dbReference type="UniPathway" id="UPA00094"/>
<dbReference type="Proteomes" id="UP000002597">
    <property type="component" value="Chromosome"/>
</dbReference>
<dbReference type="GO" id="GO:0004318">
    <property type="term" value="F:enoyl-[acyl-carrier-protein] reductase (NADH) activity"/>
    <property type="evidence" value="ECO:0007669"/>
    <property type="project" value="UniProtKB-UniRule"/>
</dbReference>
<dbReference type="GO" id="GO:0051287">
    <property type="term" value="F:NAD binding"/>
    <property type="evidence" value="ECO:0007669"/>
    <property type="project" value="UniProtKB-UniRule"/>
</dbReference>
<dbReference type="GO" id="GO:0050343">
    <property type="term" value="F:trans-2-enoyl-CoA reductase (NADH) activity"/>
    <property type="evidence" value="ECO:0007669"/>
    <property type="project" value="TreeGrafter"/>
</dbReference>
<dbReference type="GO" id="GO:0006633">
    <property type="term" value="P:fatty acid biosynthetic process"/>
    <property type="evidence" value="ECO:0007669"/>
    <property type="project" value="UniProtKB-UniRule"/>
</dbReference>
<dbReference type="FunFam" id="3.40.50.720:FF:000221">
    <property type="entry name" value="Enoyl-[acyl-carrier-protein] reductase [NADH]"/>
    <property type="match status" value="1"/>
</dbReference>
<dbReference type="Gene3D" id="3.40.50.720">
    <property type="entry name" value="NAD(P)-binding Rossmann-like Domain"/>
    <property type="match status" value="1"/>
</dbReference>
<dbReference type="HAMAP" id="MF_01838">
    <property type="entry name" value="FabV_reductase"/>
    <property type="match status" value="1"/>
</dbReference>
<dbReference type="InterPro" id="IPR024906">
    <property type="entry name" value="Eno_Rdtase_FAD-bd_dom"/>
</dbReference>
<dbReference type="InterPro" id="IPR024910">
    <property type="entry name" value="Enoyl-CoA_Rdtase_cat_dom"/>
</dbReference>
<dbReference type="InterPro" id="IPR050048">
    <property type="entry name" value="FabV-like_NADH_b"/>
</dbReference>
<dbReference type="InterPro" id="IPR010758">
    <property type="entry name" value="Trans-2-enoyl-CoA_reductase"/>
</dbReference>
<dbReference type="NCBIfam" id="NF043048">
    <property type="entry name" value="EnoyACPredFabV"/>
    <property type="match status" value="1"/>
</dbReference>
<dbReference type="NCBIfam" id="NF010177">
    <property type="entry name" value="PRK13656.1"/>
    <property type="match status" value="1"/>
</dbReference>
<dbReference type="PANTHER" id="PTHR37480">
    <property type="entry name" value="ENOYL-[ACYL-CARRIER-PROTEIN] REDUCTASE [NADH]"/>
    <property type="match status" value="1"/>
</dbReference>
<dbReference type="PANTHER" id="PTHR37480:SF1">
    <property type="entry name" value="ENOYL-[ACYL-CARRIER-PROTEIN] REDUCTASE [NADH]"/>
    <property type="match status" value="1"/>
</dbReference>
<dbReference type="Pfam" id="PF07055">
    <property type="entry name" value="Eno-Rase_FAD_bd"/>
    <property type="match status" value="1"/>
</dbReference>
<dbReference type="Pfam" id="PF12242">
    <property type="entry name" value="Eno-Rase_NADH_b"/>
    <property type="match status" value="1"/>
</dbReference>
<dbReference type="Pfam" id="PF12241">
    <property type="entry name" value="Enoyl_reductase"/>
    <property type="match status" value="1"/>
</dbReference>
<protein>
    <recommendedName>
        <fullName evidence="1">Enoyl-[acyl-carrier-protein] reductase [NADH]</fullName>
        <shortName evidence="1">ENR</shortName>
        <ecNumber evidence="1">1.3.1.9</ecNumber>
    </recommendedName>
</protein>